<evidence type="ECO:0000269" key="1">
    <source>
    </source>
</evidence>
<evidence type="ECO:0000305" key="2"/>
<evidence type="ECO:0007829" key="3">
    <source>
        <dbReference type="PDB" id="1LNS"/>
    </source>
</evidence>
<feature type="chain" id="PRO_0000220221" description="Xaa-Pro dipeptidyl-peptidase">
    <location>
        <begin position="1"/>
        <end position="763"/>
    </location>
</feature>
<feature type="active site" description="Charge relay system" evidence="1">
    <location>
        <position position="348"/>
    </location>
</feature>
<feature type="active site" description="Charge relay system">
    <location>
        <position position="468"/>
    </location>
</feature>
<feature type="active site" description="Charge relay system">
    <location>
        <position position="498"/>
    </location>
</feature>
<feature type="sequence conflict" description="In Ref. 2; AAA25232." evidence="2" ref="2">
    <original>A</original>
    <variation>D</variation>
    <location>
        <position position="50"/>
    </location>
</feature>
<feature type="sequence conflict" description="In Ref. 2; AAA25232." evidence="2" ref="2">
    <original>T</original>
    <variation>N</variation>
    <location>
        <position position="130"/>
    </location>
</feature>
<feature type="sequence conflict" description="In Ref. 2; AAA25232." evidence="2" ref="2">
    <original>L</original>
    <variation>V</variation>
    <location>
        <position position="367"/>
    </location>
</feature>
<feature type="sequence conflict" description="In Ref. 2; AAA25232." evidence="2" ref="2">
    <original>N</original>
    <variation>H</variation>
    <location>
        <position position="573"/>
    </location>
</feature>
<feature type="sequence conflict" description="In Ref. 2; AAA25232." evidence="2" ref="2">
    <original>V</original>
    <variation>A</variation>
    <location>
        <position position="649"/>
    </location>
</feature>
<feature type="sequence conflict" description="In Ref. 2; AAA25232." evidence="2" ref="2">
    <original>V</original>
    <variation>I</variation>
    <location>
        <position position="681"/>
    </location>
</feature>
<feature type="sequence conflict" description="In Ref. 2; AAA25232." evidence="2" ref="2">
    <original>S</original>
    <variation>N</variation>
    <location>
        <position position="692"/>
    </location>
</feature>
<feature type="helix" evidence="3">
    <location>
        <begin position="13"/>
        <end position="22"/>
    </location>
</feature>
<feature type="helix" evidence="3">
    <location>
        <begin position="33"/>
        <end position="42"/>
    </location>
</feature>
<feature type="strand" evidence="3">
    <location>
        <begin position="44"/>
        <end position="46"/>
    </location>
</feature>
<feature type="helix" evidence="3">
    <location>
        <begin position="48"/>
        <end position="50"/>
    </location>
</feature>
<feature type="strand" evidence="3">
    <location>
        <begin position="54"/>
        <end position="56"/>
    </location>
</feature>
<feature type="helix" evidence="3">
    <location>
        <begin position="59"/>
        <end position="64"/>
    </location>
</feature>
<feature type="helix" evidence="3">
    <location>
        <begin position="71"/>
        <end position="81"/>
    </location>
</feature>
<feature type="turn" evidence="3">
    <location>
        <begin position="86"/>
        <end position="88"/>
    </location>
</feature>
<feature type="helix" evidence="3">
    <location>
        <begin position="95"/>
        <end position="101"/>
    </location>
</feature>
<feature type="helix" evidence="3">
    <location>
        <begin position="113"/>
        <end position="125"/>
    </location>
</feature>
<feature type="strand" evidence="3">
    <location>
        <begin position="131"/>
        <end position="133"/>
    </location>
</feature>
<feature type="helix" evidence="3">
    <location>
        <begin position="134"/>
        <end position="140"/>
    </location>
</feature>
<feature type="helix" evidence="3">
    <location>
        <begin position="163"/>
        <end position="165"/>
    </location>
</feature>
<feature type="strand" evidence="3">
    <location>
        <begin position="167"/>
        <end position="174"/>
    </location>
</feature>
<feature type="strand" evidence="3">
    <location>
        <begin position="182"/>
        <end position="184"/>
    </location>
</feature>
<feature type="strand" evidence="3">
    <location>
        <begin position="187"/>
        <end position="194"/>
    </location>
</feature>
<feature type="strand" evidence="3">
    <location>
        <begin position="201"/>
        <end position="207"/>
    </location>
</feature>
<feature type="helix" evidence="3">
    <location>
        <begin position="216"/>
        <end position="222"/>
    </location>
</feature>
<feature type="strand" evidence="3">
    <location>
        <begin position="235"/>
        <end position="237"/>
    </location>
</feature>
<feature type="helix" evidence="3">
    <location>
        <begin position="272"/>
        <end position="278"/>
    </location>
</feature>
<feature type="turn" evidence="3">
    <location>
        <begin position="279"/>
        <end position="281"/>
    </location>
</feature>
<feature type="strand" evidence="3">
    <location>
        <begin position="283"/>
        <end position="287"/>
    </location>
</feature>
<feature type="helix" evidence="3">
    <location>
        <begin position="304"/>
        <end position="317"/>
    </location>
</feature>
<feature type="strand" evidence="3">
    <location>
        <begin position="323"/>
        <end position="326"/>
    </location>
</feature>
<feature type="strand" evidence="3">
    <location>
        <begin position="338"/>
        <end position="347"/>
    </location>
</feature>
<feature type="helix" evidence="3">
    <location>
        <begin position="349"/>
        <end position="358"/>
    </location>
</feature>
<feature type="turn" evidence="3">
    <location>
        <begin position="359"/>
        <end position="361"/>
    </location>
</feature>
<feature type="strand" evidence="3">
    <location>
        <begin position="365"/>
        <end position="372"/>
    </location>
</feature>
<feature type="helix" evidence="3">
    <location>
        <begin position="377"/>
        <end position="381"/>
    </location>
</feature>
<feature type="strand" evidence="3">
    <location>
        <begin position="382"/>
        <end position="387"/>
    </location>
</feature>
<feature type="helix" evidence="3">
    <location>
        <begin position="398"/>
        <end position="405"/>
    </location>
</feature>
<feature type="helix" evidence="3">
    <location>
        <begin position="407"/>
        <end position="410"/>
    </location>
</feature>
<feature type="helix" evidence="3">
    <location>
        <begin position="412"/>
        <end position="433"/>
    </location>
</feature>
<feature type="turn" evidence="3">
    <location>
        <begin position="435"/>
        <end position="437"/>
    </location>
</feature>
<feature type="helix" evidence="3">
    <location>
        <begin position="442"/>
        <end position="445"/>
    </location>
</feature>
<feature type="helix" evidence="3">
    <location>
        <begin position="449"/>
        <end position="455"/>
    </location>
</feature>
<feature type="strand" evidence="3">
    <location>
        <begin position="458"/>
        <end position="465"/>
    </location>
</feature>
<feature type="helix" evidence="3">
    <location>
        <begin position="474"/>
        <end position="482"/>
    </location>
</feature>
<feature type="strand" evidence="3">
    <location>
        <begin position="489"/>
        <end position="495"/>
    </location>
</feature>
<feature type="strand" evidence="3">
    <location>
        <begin position="504"/>
        <end position="506"/>
    </location>
</feature>
<feature type="helix" evidence="3">
    <location>
        <begin position="509"/>
        <end position="521"/>
    </location>
</feature>
<feature type="strand" evidence="3">
    <location>
        <begin position="532"/>
        <end position="536"/>
    </location>
</feature>
<feature type="strand" evidence="3">
    <location>
        <begin position="540"/>
        <end position="542"/>
    </location>
</feature>
<feature type="strand" evidence="3">
    <location>
        <begin position="544"/>
        <end position="548"/>
    </location>
</feature>
<feature type="strand" evidence="3">
    <location>
        <begin position="555"/>
        <end position="560"/>
    </location>
</feature>
<feature type="strand" evidence="3">
    <location>
        <begin position="562"/>
        <end position="565"/>
    </location>
</feature>
<feature type="strand" evidence="3">
    <location>
        <begin position="567"/>
        <end position="572"/>
    </location>
</feature>
<feature type="helix" evidence="3">
    <location>
        <begin position="576"/>
        <end position="584"/>
    </location>
</feature>
<feature type="helix" evidence="3">
    <location>
        <begin position="586"/>
        <end position="594"/>
    </location>
</feature>
<feature type="strand" evidence="3">
    <location>
        <begin position="601"/>
        <end position="606"/>
    </location>
</feature>
<feature type="strand" evidence="3">
    <location>
        <begin position="611"/>
        <end position="615"/>
    </location>
</feature>
<feature type="strand" evidence="3">
    <location>
        <begin position="618"/>
        <end position="628"/>
    </location>
</feature>
<feature type="strand" evidence="3">
    <location>
        <begin position="631"/>
        <end position="645"/>
    </location>
</feature>
<feature type="strand" evidence="3">
    <location>
        <begin position="650"/>
        <end position="657"/>
    </location>
</feature>
<feature type="strand" evidence="3">
    <location>
        <begin position="659"/>
        <end position="662"/>
    </location>
</feature>
<feature type="strand" evidence="3">
    <location>
        <begin position="666"/>
        <end position="670"/>
    </location>
</feature>
<feature type="strand" evidence="3">
    <location>
        <begin position="673"/>
        <end position="687"/>
    </location>
</feature>
<feature type="strand" evidence="3">
    <location>
        <begin position="690"/>
        <end position="692"/>
    </location>
</feature>
<feature type="strand" evidence="3">
    <location>
        <begin position="705"/>
        <end position="710"/>
    </location>
</feature>
<feature type="strand" evidence="3">
    <location>
        <begin position="714"/>
        <end position="718"/>
    </location>
</feature>
<feature type="strand" evidence="3">
    <location>
        <begin position="723"/>
        <end position="730"/>
    </location>
</feature>
<feature type="turn" evidence="3">
    <location>
        <begin position="733"/>
        <end position="735"/>
    </location>
</feature>
<feature type="strand" evidence="3">
    <location>
        <begin position="744"/>
        <end position="748"/>
    </location>
</feature>
<feature type="helix" evidence="3">
    <location>
        <begin position="749"/>
        <end position="751"/>
    </location>
</feature>
<feature type="strand" evidence="3">
    <location>
        <begin position="753"/>
        <end position="758"/>
    </location>
</feature>
<sequence length="763" mass="87697">MRFNHFSIVDKNFDEQLAELDQLGFRWSVFWDEKKILKDFLIQSPSDMTALQATAELDVIEFLKSSIELDWEIFWNIALQLLDFVPNFDFEIGKAFEYAKNSNLPQIEAEMTTENIISAFYYLLCTRRKTGMILVEHWVSEGLLPLDNHYHFFNDKSLATFDSSLLEREVLWVESPVDSEQRGENDLIKIQIIRPKSTEKLPVVMTASPYHLGINDKANDLALHDMNVELEEKTSHEIHVEQKLPQKLSAKAKELPIVDKAPYRFTHGWTYSLNDYFLTRGFASIYVAGVGTRSSDGFQTSGDYQQIYSMTAVIDWLNGRARAYTSRKKTHEIKASWANGKVAMTGKSYLGTMAYGAATTGVEGLELILAEAGISSWYNYYRENGLVRSPGGFPGEDLDVLAALTYSRNLDGADFLKGNAEYEKRLAEMTAALDRKSGDYNQFWHDRNYLINTDKVKADVLIVHGLQDWNVTPEQAYNFWKALPEGHAKHAFLHRGAHIYMNSWQSIDFSETINAYFVAKLLDRDLNLNLPPVILQENSKDQVWTMMNDFGANTQIKLPLGKTAVSFAQFDNNYDDETFKKYSKDFNVFKKDLFENKANEAVIDLELPSMLTINGPVELELRLKLNDTKGFLSAQILDFGQKKRLEDKVRVKDFKVLDRGRNFMLDDLVELPLVESPYQLVTKGFTNLQNQSLLTVSDLKADEWFTIKFELQPTIYHLEKADKLRVILYSTDFEHTVRDNRKVTYEIDLSQSKLIIPIESVKN</sequence>
<keyword id="KW-0002">3D-structure</keyword>
<keyword id="KW-0031">Aminopeptidase</keyword>
<keyword id="KW-0963">Cytoplasm</keyword>
<keyword id="KW-0903">Direct protein sequencing</keyword>
<keyword id="KW-0378">Hydrolase</keyword>
<keyword id="KW-0645">Protease</keyword>
<keyword id="KW-0720">Serine protease</keyword>
<gene>
    <name type="primary">pepX</name>
</gene>
<protein>
    <recommendedName>
        <fullName>Xaa-Pro dipeptidyl-peptidase</fullName>
        <ecNumber>3.4.14.11</ecNumber>
    </recommendedName>
    <alternativeName>
        <fullName>X-Pro dipeptidyl-peptidase</fullName>
    </alternativeName>
    <alternativeName>
        <fullName>X-prolyl-dipeptidyl aminopeptidase</fullName>
        <shortName>X-PDAP</shortName>
    </alternativeName>
</protein>
<reference key="1">
    <citation type="journal article" date="1991" name="Appl. Environ. Microbiol.">
        <title>Cloning and DNA sequence analysis of an X-prolyl dipeptidyl aminopeptidase gene from Lactococcus lactis subsp. lactis NCDO 763.</title>
        <authorList>
            <person name="Nardi M."/>
            <person name="Chopin M.-C."/>
            <person name="Chopin A."/>
            <person name="Cals M.M."/>
            <person name="Gripon J.-C."/>
        </authorList>
    </citation>
    <scope>NUCLEOTIDE SEQUENCE [GENOMIC DNA]</scope>
    <source>
        <strain>NCDO 763 / ML3</strain>
    </source>
</reference>
<reference key="2">
    <citation type="journal article" date="1991" name="Appl. Environ. Microbiol.">
        <title>Molecular cloning and sequence analysis of the X-prolyl dipeptidyl aminopeptidase gene from Lactococcus lactis subsp. cremoris.</title>
        <authorList>
            <person name="Mayo B."/>
            <person name="Kok J."/>
            <person name="Venema K."/>
            <person name="Bockelmann W."/>
            <person name="Teuber M."/>
            <person name="Reinke H."/>
            <person name="Venema G."/>
        </authorList>
    </citation>
    <scope>NUCLEOTIDE SEQUENCE [GENOMIC DNA]</scope>
    <scope>PROTEIN SEQUENCE OF 1-25</scope>
    <source>
        <strain>P8-2-47</strain>
    </source>
</reference>
<reference key="3">
    <citation type="journal article" date="1992" name="FEBS Lett.">
        <title>Identification of the active site serine of the X-prolyl dipeptidyl aminopeptidase from Lactococcus lactis.</title>
        <authorList>
            <person name="Chich J.-F."/>
            <person name="Chapot-Chartier M.P."/>
            <person name="Ribadeau-Dumas B."/>
            <person name="Gripon J.-C."/>
        </authorList>
    </citation>
    <scope>ACTIVE SITE SER-348</scope>
</reference>
<reference key="4">
    <citation type="journal article" date="2002" name="Structure">
        <title>The structural basis for catalysis and specificity of the X-prolyl dipeptidyl aminopeptidase from Lactococcus lactis.</title>
        <authorList>
            <person name="Rigolet P."/>
            <person name="Mechin I."/>
            <person name="Delage M.-M."/>
            <person name="Chich J.-F."/>
        </authorList>
    </citation>
    <scope>X-RAY CRYSTALLOGRAPHY (2.2 ANGSTROMS)</scope>
</reference>
<name>PEPX_LACLC</name>
<comment type="function">
    <text>Removes N-terminal dipeptides sequentially from polypeptides having unsubstituted N-termini provided that the penultimate residue is proline.</text>
</comment>
<comment type="catalytic activity">
    <reaction>
        <text>Hydrolyzes Xaa-Pro-|- bonds to release unblocked, N-terminal dipeptides from substrates including Ala-Pro-|-p-nitroanilide and (sequentially) Tyr-Pro-|-Phe-Pro-|-Gly-Pro-|-Ile.</text>
        <dbReference type="EC" id="3.4.14.11"/>
    </reaction>
</comment>
<comment type="subunit">
    <text>Homodimer.</text>
</comment>
<comment type="subcellular location">
    <subcellularLocation>
        <location>Cytoplasm</location>
    </subcellularLocation>
</comment>
<comment type="similarity">
    <text evidence="2">Belongs to the peptidase S15 family.</text>
</comment>
<organism>
    <name type="scientific">Lactococcus lactis subsp. cremoris</name>
    <name type="common">Streptococcus cremoris</name>
    <dbReference type="NCBI Taxonomy" id="1359"/>
    <lineage>
        <taxon>Bacteria</taxon>
        <taxon>Bacillati</taxon>
        <taxon>Bacillota</taxon>
        <taxon>Bacilli</taxon>
        <taxon>Lactobacillales</taxon>
        <taxon>Streptococcaceae</taxon>
        <taxon>Lactococcus</taxon>
    </lineage>
</organism>
<dbReference type="EC" id="3.4.14.11"/>
<dbReference type="EMBL" id="M35865">
    <property type="protein sequence ID" value="AAA25207.1"/>
    <property type="molecule type" value="Genomic_DNA"/>
</dbReference>
<dbReference type="EMBL" id="M58315">
    <property type="protein sequence ID" value="AAA25232.1"/>
    <property type="molecule type" value="Genomic_DNA"/>
</dbReference>
<dbReference type="PIR" id="A43747">
    <property type="entry name" value="A43747"/>
</dbReference>
<dbReference type="PIR" id="A43748">
    <property type="entry name" value="A43748"/>
</dbReference>
<dbReference type="RefSeq" id="WP_011835997.1">
    <property type="nucleotide sequence ID" value="NZ_RIMN01000019.1"/>
</dbReference>
<dbReference type="RefSeq" id="WP_021165010.1">
    <property type="nucleotide sequence ID" value="NZ_WJUX01000052.1"/>
</dbReference>
<dbReference type="PDB" id="1LNS">
    <property type="method" value="X-ray"/>
    <property type="resolution" value="2.20 A"/>
    <property type="chains" value="A=1-763"/>
</dbReference>
<dbReference type="PDBsum" id="1LNS"/>
<dbReference type="SMR" id="P22346"/>
<dbReference type="ESTHER" id="lacla-pepx">
    <property type="family name" value="Lactobacillus_peptidase"/>
</dbReference>
<dbReference type="MEROPS" id="S15.001"/>
<dbReference type="OMA" id="NDWNVKP"/>
<dbReference type="BRENDA" id="3.4.14.11">
    <property type="organism ID" value="2903"/>
</dbReference>
<dbReference type="BRENDA" id="3.4.14.5">
    <property type="organism ID" value="2903"/>
</dbReference>
<dbReference type="EvolutionaryTrace" id="P22346"/>
<dbReference type="GO" id="GO:0005737">
    <property type="term" value="C:cytoplasm"/>
    <property type="evidence" value="ECO:0007669"/>
    <property type="project" value="UniProtKB-SubCell"/>
</dbReference>
<dbReference type="GO" id="GO:0004177">
    <property type="term" value="F:aminopeptidase activity"/>
    <property type="evidence" value="ECO:0007669"/>
    <property type="project" value="UniProtKB-KW"/>
</dbReference>
<dbReference type="GO" id="GO:0008239">
    <property type="term" value="F:dipeptidyl-peptidase activity"/>
    <property type="evidence" value="ECO:0007669"/>
    <property type="project" value="UniProtKB-UniRule"/>
</dbReference>
<dbReference type="GO" id="GO:0008236">
    <property type="term" value="F:serine-type peptidase activity"/>
    <property type="evidence" value="ECO:0007669"/>
    <property type="project" value="UniProtKB-KW"/>
</dbReference>
<dbReference type="GO" id="GO:0006508">
    <property type="term" value="P:proteolysis"/>
    <property type="evidence" value="ECO:0007669"/>
    <property type="project" value="UniProtKB-KW"/>
</dbReference>
<dbReference type="Gene3D" id="1.10.246.70">
    <property type="match status" value="1"/>
</dbReference>
<dbReference type="Gene3D" id="3.40.50.1820">
    <property type="entry name" value="alpha/beta hydrolase"/>
    <property type="match status" value="1"/>
</dbReference>
<dbReference type="Gene3D" id="2.60.120.260">
    <property type="entry name" value="Galactose-binding domain-like"/>
    <property type="match status" value="1"/>
</dbReference>
<dbReference type="HAMAP" id="MF_00698">
    <property type="entry name" value="Aminopeptidase_S15"/>
    <property type="match status" value="1"/>
</dbReference>
<dbReference type="InterPro" id="IPR029058">
    <property type="entry name" value="AB_hydrolase_fold"/>
</dbReference>
<dbReference type="InterPro" id="IPR008979">
    <property type="entry name" value="Galactose-bd-like_sf"/>
</dbReference>
<dbReference type="InterPro" id="IPR008252">
    <property type="entry name" value="Pept_S15_Xpro"/>
</dbReference>
<dbReference type="InterPro" id="IPR015251">
    <property type="entry name" value="PepX_N_dom"/>
</dbReference>
<dbReference type="InterPro" id="IPR036313">
    <property type="entry name" value="PepX_N_dom_sf"/>
</dbReference>
<dbReference type="InterPro" id="IPR000383">
    <property type="entry name" value="Xaa-Pro-like_dom"/>
</dbReference>
<dbReference type="InterPro" id="IPR013736">
    <property type="entry name" value="Xaa-Pro_dipept_C"/>
</dbReference>
<dbReference type="InterPro" id="IPR050585">
    <property type="entry name" value="Xaa-Pro_dipeptidyl-ppase/CocE"/>
</dbReference>
<dbReference type="NCBIfam" id="NF003783">
    <property type="entry name" value="PRK05371.1-4"/>
    <property type="match status" value="1"/>
</dbReference>
<dbReference type="PANTHER" id="PTHR43056:SF10">
    <property type="entry name" value="COCE_NOND FAMILY, PUTATIVE (AFU_ORTHOLOGUE AFUA_7G00600)-RELATED"/>
    <property type="match status" value="1"/>
</dbReference>
<dbReference type="PANTHER" id="PTHR43056">
    <property type="entry name" value="PEPTIDASE S9 PROLYL OLIGOPEPTIDASE"/>
    <property type="match status" value="1"/>
</dbReference>
<dbReference type="Pfam" id="PF02129">
    <property type="entry name" value="Peptidase_S15"/>
    <property type="match status" value="1"/>
</dbReference>
<dbReference type="Pfam" id="PF08530">
    <property type="entry name" value="PepX_C"/>
    <property type="match status" value="1"/>
</dbReference>
<dbReference type="Pfam" id="PF09168">
    <property type="entry name" value="PepX_N"/>
    <property type="match status" value="1"/>
</dbReference>
<dbReference type="PRINTS" id="PR00923">
    <property type="entry name" value="LACTOPTASE"/>
</dbReference>
<dbReference type="SMART" id="SM00939">
    <property type="entry name" value="PepX_C"/>
    <property type="match status" value="1"/>
</dbReference>
<dbReference type="SMART" id="SM00940">
    <property type="entry name" value="PepX_N"/>
    <property type="match status" value="1"/>
</dbReference>
<dbReference type="SUPFAM" id="SSF53474">
    <property type="entry name" value="alpha/beta-Hydrolases"/>
    <property type="match status" value="1"/>
</dbReference>
<dbReference type="SUPFAM" id="SSF49785">
    <property type="entry name" value="Galactose-binding domain-like"/>
    <property type="match status" value="1"/>
</dbReference>
<dbReference type="SUPFAM" id="SSF81761">
    <property type="entry name" value="X-Prolyl dipeptidyl aminopeptidase PepX, N-terminal domain"/>
    <property type="match status" value="1"/>
</dbReference>
<proteinExistence type="evidence at protein level"/>
<accession>P22346</accession>
<accession>P22093</accession>